<reference key="1">
    <citation type="journal article" date="1999" name="Ann. Mo. Bot. Gard.">
        <title>Phylogeny of Poaceae inferred from matK sequences.</title>
        <authorList>
            <person name="Hilu K.W."/>
            <person name="Alice L.A."/>
            <person name="Liang H."/>
        </authorList>
    </citation>
    <scope>NUCLEOTIDE SEQUENCE [GENOMIC DNA]</scope>
</reference>
<accession>Q9MUY0</accession>
<comment type="function">
    <text evidence="1">Usually encoded in the trnK tRNA gene intron. Probably assists in splicing its own and other chloroplast group II introns.</text>
</comment>
<comment type="subcellular location">
    <subcellularLocation>
        <location>Plastid</location>
        <location>Chloroplast</location>
    </subcellularLocation>
</comment>
<comment type="similarity">
    <text evidence="1">Belongs to the intron maturase 2 family. MatK subfamily.</text>
</comment>
<protein>
    <recommendedName>
        <fullName evidence="1">Maturase K</fullName>
    </recommendedName>
    <alternativeName>
        <fullName evidence="1">Intron maturase</fullName>
    </alternativeName>
</protein>
<keyword id="KW-0150">Chloroplast</keyword>
<keyword id="KW-0507">mRNA processing</keyword>
<keyword id="KW-0934">Plastid</keyword>
<keyword id="KW-0694">RNA-binding</keyword>
<keyword id="KW-0819">tRNA processing</keyword>
<evidence type="ECO:0000255" key="1">
    <source>
        <dbReference type="HAMAP-Rule" id="MF_01390"/>
    </source>
</evidence>
<geneLocation type="chloroplast"/>
<proteinExistence type="inferred from homology"/>
<dbReference type="EMBL" id="AF164411">
    <property type="protein sequence ID" value="AAF66198.1"/>
    <property type="molecule type" value="Genomic_DNA"/>
</dbReference>
<dbReference type="RefSeq" id="YP_009349674.1">
    <property type="nucleotide sequence ID" value="NC_033980.1"/>
</dbReference>
<dbReference type="GeneID" id="31086770"/>
<dbReference type="GO" id="GO:0009507">
    <property type="term" value="C:chloroplast"/>
    <property type="evidence" value="ECO:0007669"/>
    <property type="project" value="UniProtKB-SubCell"/>
</dbReference>
<dbReference type="GO" id="GO:0003723">
    <property type="term" value="F:RNA binding"/>
    <property type="evidence" value="ECO:0007669"/>
    <property type="project" value="UniProtKB-KW"/>
</dbReference>
<dbReference type="GO" id="GO:0006397">
    <property type="term" value="P:mRNA processing"/>
    <property type="evidence" value="ECO:0007669"/>
    <property type="project" value="UniProtKB-KW"/>
</dbReference>
<dbReference type="GO" id="GO:0008380">
    <property type="term" value="P:RNA splicing"/>
    <property type="evidence" value="ECO:0007669"/>
    <property type="project" value="UniProtKB-UniRule"/>
</dbReference>
<dbReference type="GO" id="GO:0008033">
    <property type="term" value="P:tRNA processing"/>
    <property type="evidence" value="ECO:0007669"/>
    <property type="project" value="UniProtKB-KW"/>
</dbReference>
<dbReference type="HAMAP" id="MF_01390">
    <property type="entry name" value="MatK"/>
    <property type="match status" value="1"/>
</dbReference>
<dbReference type="InterPro" id="IPR024937">
    <property type="entry name" value="Domain_X"/>
</dbReference>
<dbReference type="InterPro" id="IPR002866">
    <property type="entry name" value="Maturase_MatK"/>
</dbReference>
<dbReference type="InterPro" id="IPR024942">
    <property type="entry name" value="Maturase_MatK_N"/>
</dbReference>
<dbReference type="PANTHER" id="PTHR34811">
    <property type="entry name" value="MATURASE K"/>
    <property type="match status" value="1"/>
</dbReference>
<dbReference type="PANTHER" id="PTHR34811:SF1">
    <property type="entry name" value="MATURASE K"/>
    <property type="match status" value="1"/>
</dbReference>
<dbReference type="Pfam" id="PF01348">
    <property type="entry name" value="Intron_maturas2"/>
    <property type="match status" value="1"/>
</dbReference>
<dbReference type="Pfam" id="PF01824">
    <property type="entry name" value="MatK_N"/>
    <property type="match status" value="1"/>
</dbReference>
<organism>
    <name type="scientific">Molinia caerulea</name>
    <name type="common">Purple moor-grass</name>
    <name type="synonym">Aira caerulea</name>
    <dbReference type="NCBI Taxonomy" id="38689"/>
    <lineage>
        <taxon>Eukaryota</taxon>
        <taxon>Viridiplantae</taxon>
        <taxon>Streptophyta</taxon>
        <taxon>Embryophyta</taxon>
        <taxon>Tracheophyta</taxon>
        <taxon>Spermatophyta</taxon>
        <taxon>Magnoliopsida</taxon>
        <taxon>Liliopsida</taxon>
        <taxon>Poales</taxon>
        <taxon>Poaceae</taxon>
        <taxon>PACMAD clade</taxon>
        <taxon>Arundinoideae</taxon>
        <taxon>Molinieae</taxon>
        <taxon>Molininae</taxon>
        <taxon>Molinia</taxon>
    </lineage>
</organism>
<gene>
    <name evidence="1" type="primary">matK</name>
</gene>
<sequence>MEKFEGYSEKQKSRQQYFVYPLLFQEYIYAFAHDYGLNGSEPVEIFGCNNKKFSSLLVKRLIIRMYQQNFWINSVNHPNQDRLLDHSNYFYSEFYSQILSEGFAIVVEIPFSLGELSCPEEKEIPKFQNLQSIHSIFPFLEDKFLHLHYLSHLEIPYPIHLEILVQLLEYRIQDVPSLHLLRFFLNYYSNWNSLIISMKSIFLLKKENKRLFRFLYNSYVSEYEFFLLFLRKQSSCLRLTSSGTFLERIIFSRKMEHFGVMYPGFFRKTIWFFMDPLMHYVRYQGKAILASKGTLLLKKKWKSYLVNFSQYFFSFWTQPQRIRLNQLTNSCFDFLGYLSSVPINTLLVRNQMLENSFLIDTRMKKFDTTVPATPLIGSLSKAQFCTGSGHPISKPVWTDLSDWDILDRFGRICRNLFHYHSGSSKKRTLYRLKYILRLSCARTLARKHKSTVRTFMQRLGSVFLEEFFTEEEQVFSLMFTKTTHFSFHGSHSERIWYLDIIRINDLVNPLTLN</sequence>
<feature type="chain" id="PRO_0000143527" description="Maturase K">
    <location>
        <begin position="1"/>
        <end position="513"/>
    </location>
</feature>
<name>MATK_MOLCA</name>